<comment type="catalytic activity">
    <reaction evidence="1">
        <text>L-aspartate + NH4(+) + ATP = L-asparagine + AMP + diphosphate + H(+)</text>
        <dbReference type="Rhea" id="RHEA:11372"/>
        <dbReference type="ChEBI" id="CHEBI:15378"/>
        <dbReference type="ChEBI" id="CHEBI:28938"/>
        <dbReference type="ChEBI" id="CHEBI:29991"/>
        <dbReference type="ChEBI" id="CHEBI:30616"/>
        <dbReference type="ChEBI" id="CHEBI:33019"/>
        <dbReference type="ChEBI" id="CHEBI:58048"/>
        <dbReference type="ChEBI" id="CHEBI:456215"/>
        <dbReference type="EC" id="6.3.1.1"/>
    </reaction>
</comment>
<comment type="pathway">
    <text evidence="1">Amino-acid biosynthesis; L-asparagine biosynthesis; L-asparagine from L-aspartate (ammonia route): step 1/1.</text>
</comment>
<comment type="subcellular location">
    <subcellularLocation>
        <location evidence="1">Cytoplasm</location>
    </subcellularLocation>
</comment>
<comment type="similarity">
    <text evidence="1">Belongs to the class-II aminoacyl-tRNA synthetase family. AsnA subfamily.</text>
</comment>
<sequence>MYNLSILETQKAIKFIKDLFQVNLAHALKLHRVTAPLVLERNKGINDDLNGSENPVTFTSDGNGISGEIPQSLAKWKRMMLGKYEIPLHEGIYADMNAIRKDESLSSIHSIYVDQWDWELHIKKTERNLETLKVVVKKIYEIIRLCQKEVNKKYEWFAENLLPEEITFISSEDLLQRYPNKTPKERERLIASKYKAVFIIGIGDNLSDGKPHDLRAPDYDDWKLNGDIIVWNETTKSALELSSMGIRVDEVSLVEQLDKSNNNSRKELDFHKKLINKEFPYSIGGGIGQSRLCYFLLHKQHIGEVQSSLWPKDILEEAEKNNIKLL</sequence>
<organism>
    <name type="scientific">Malacoplasma penetrans (strain HF-2)</name>
    <name type="common">Mycoplasma penetrans</name>
    <dbReference type="NCBI Taxonomy" id="272633"/>
    <lineage>
        <taxon>Bacteria</taxon>
        <taxon>Bacillati</taxon>
        <taxon>Mycoplasmatota</taxon>
        <taxon>Mycoplasmoidales</taxon>
        <taxon>Mycoplasmoidaceae</taxon>
        <taxon>Malacoplasma</taxon>
    </lineage>
</organism>
<gene>
    <name evidence="1" type="primary">asnA</name>
    <name type="ordered locus">MYPE1480</name>
</gene>
<name>ASNA_MALP2</name>
<dbReference type="EC" id="6.3.1.1" evidence="1"/>
<dbReference type="EMBL" id="BA000026">
    <property type="protein sequence ID" value="BAC43939.1"/>
    <property type="molecule type" value="Genomic_DNA"/>
</dbReference>
<dbReference type="RefSeq" id="WP_011076975.1">
    <property type="nucleotide sequence ID" value="NC_004432.1"/>
</dbReference>
<dbReference type="SMR" id="Q8EWQ5"/>
<dbReference type="STRING" id="272633.gene:10731247"/>
<dbReference type="KEGG" id="mpe:MYPE1480"/>
<dbReference type="eggNOG" id="COG2502">
    <property type="taxonomic scope" value="Bacteria"/>
</dbReference>
<dbReference type="HOGENOM" id="CLU_071543_0_0_14"/>
<dbReference type="InParanoid" id="Q8EWQ5"/>
<dbReference type="UniPathway" id="UPA00134">
    <property type="reaction ID" value="UER00194"/>
</dbReference>
<dbReference type="Proteomes" id="UP000002522">
    <property type="component" value="Chromosome"/>
</dbReference>
<dbReference type="GO" id="GO:0005829">
    <property type="term" value="C:cytosol"/>
    <property type="evidence" value="ECO:0007669"/>
    <property type="project" value="TreeGrafter"/>
</dbReference>
<dbReference type="GO" id="GO:0004071">
    <property type="term" value="F:aspartate-ammonia ligase activity"/>
    <property type="evidence" value="ECO:0007669"/>
    <property type="project" value="UniProtKB-UniRule"/>
</dbReference>
<dbReference type="GO" id="GO:0005524">
    <property type="term" value="F:ATP binding"/>
    <property type="evidence" value="ECO:0007669"/>
    <property type="project" value="UniProtKB-UniRule"/>
</dbReference>
<dbReference type="GO" id="GO:0070981">
    <property type="term" value="P:L-asparagine biosynthetic process"/>
    <property type="evidence" value="ECO:0007669"/>
    <property type="project" value="UniProtKB-UniRule"/>
</dbReference>
<dbReference type="CDD" id="cd00645">
    <property type="entry name" value="AsnA"/>
    <property type="match status" value="1"/>
</dbReference>
<dbReference type="Gene3D" id="3.30.930.10">
    <property type="entry name" value="Bira Bifunctional Protein, Domain 2"/>
    <property type="match status" value="1"/>
</dbReference>
<dbReference type="HAMAP" id="MF_00555">
    <property type="entry name" value="AsnA"/>
    <property type="match status" value="1"/>
</dbReference>
<dbReference type="InterPro" id="IPR006195">
    <property type="entry name" value="aa-tRNA-synth_II"/>
</dbReference>
<dbReference type="InterPro" id="IPR045864">
    <property type="entry name" value="aa-tRNA-synth_II/BPL/LPL"/>
</dbReference>
<dbReference type="InterPro" id="IPR004618">
    <property type="entry name" value="AsnA"/>
</dbReference>
<dbReference type="NCBIfam" id="TIGR00669">
    <property type="entry name" value="asnA"/>
    <property type="match status" value="1"/>
</dbReference>
<dbReference type="PANTHER" id="PTHR30073">
    <property type="entry name" value="ASPARTATE--AMMONIA LIGASE"/>
    <property type="match status" value="1"/>
</dbReference>
<dbReference type="PANTHER" id="PTHR30073:SF5">
    <property type="entry name" value="ASPARTATE--AMMONIA LIGASE"/>
    <property type="match status" value="1"/>
</dbReference>
<dbReference type="Pfam" id="PF03590">
    <property type="entry name" value="AsnA"/>
    <property type="match status" value="1"/>
</dbReference>
<dbReference type="PIRSF" id="PIRSF001555">
    <property type="entry name" value="Asp_ammon_ligase"/>
    <property type="match status" value="1"/>
</dbReference>
<dbReference type="SUPFAM" id="SSF55681">
    <property type="entry name" value="Class II aaRS and biotin synthetases"/>
    <property type="match status" value="1"/>
</dbReference>
<dbReference type="PROSITE" id="PS50862">
    <property type="entry name" value="AA_TRNA_LIGASE_II"/>
    <property type="match status" value="1"/>
</dbReference>
<protein>
    <recommendedName>
        <fullName evidence="1">Aspartate--ammonia ligase</fullName>
        <ecNumber evidence="1">6.3.1.1</ecNumber>
    </recommendedName>
    <alternativeName>
        <fullName evidence="1">Asparagine synthetase A</fullName>
    </alternativeName>
</protein>
<keyword id="KW-0028">Amino-acid biosynthesis</keyword>
<keyword id="KW-0061">Asparagine biosynthesis</keyword>
<keyword id="KW-0067">ATP-binding</keyword>
<keyword id="KW-0963">Cytoplasm</keyword>
<keyword id="KW-0436">Ligase</keyword>
<keyword id="KW-0547">Nucleotide-binding</keyword>
<keyword id="KW-1185">Reference proteome</keyword>
<proteinExistence type="inferred from homology"/>
<evidence type="ECO:0000255" key="1">
    <source>
        <dbReference type="HAMAP-Rule" id="MF_00555"/>
    </source>
</evidence>
<feature type="chain" id="PRO_0000195883" description="Aspartate--ammonia ligase">
    <location>
        <begin position="1"/>
        <end position="326"/>
    </location>
</feature>
<accession>Q8EWQ5</accession>
<reference key="1">
    <citation type="journal article" date="2002" name="Nucleic Acids Res.">
        <title>The complete genomic sequence of Mycoplasma penetrans, an intracellular bacterial pathogen in humans.</title>
        <authorList>
            <person name="Sasaki Y."/>
            <person name="Ishikawa J."/>
            <person name="Yamashita A."/>
            <person name="Oshima K."/>
            <person name="Kenri T."/>
            <person name="Furuya K."/>
            <person name="Yoshino C."/>
            <person name="Horino A."/>
            <person name="Shiba T."/>
            <person name="Sasaki T."/>
            <person name="Hattori M."/>
        </authorList>
    </citation>
    <scope>NUCLEOTIDE SEQUENCE [LARGE SCALE GENOMIC DNA]</scope>
    <source>
        <strain>HF-2</strain>
    </source>
</reference>